<organism>
    <name type="scientific">Rattus norvegicus</name>
    <name type="common">Rat</name>
    <dbReference type="NCBI Taxonomy" id="10116"/>
    <lineage>
        <taxon>Eukaryota</taxon>
        <taxon>Metazoa</taxon>
        <taxon>Chordata</taxon>
        <taxon>Craniata</taxon>
        <taxon>Vertebrata</taxon>
        <taxon>Euteleostomi</taxon>
        <taxon>Mammalia</taxon>
        <taxon>Eutheria</taxon>
        <taxon>Euarchontoglires</taxon>
        <taxon>Glires</taxon>
        <taxon>Rodentia</taxon>
        <taxon>Myomorpha</taxon>
        <taxon>Muroidea</taxon>
        <taxon>Muridae</taxon>
        <taxon>Murinae</taxon>
        <taxon>Rattus</taxon>
    </lineage>
</organism>
<evidence type="ECO:0000250" key="1"/>
<evidence type="ECO:0000250" key="2">
    <source>
        <dbReference type="UniProtKB" id="P06623"/>
    </source>
</evidence>
<evidence type="ECO:0000250" key="3">
    <source>
        <dbReference type="UniProtKB" id="P09543"/>
    </source>
</evidence>
<evidence type="ECO:0000250" key="4">
    <source>
        <dbReference type="UniProtKB" id="P16330"/>
    </source>
</evidence>
<evidence type="ECO:0000269" key="5">
    <source>
    </source>
</evidence>
<evidence type="ECO:0000269" key="6">
    <source>
    </source>
</evidence>
<evidence type="ECO:0000305" key="7"/>
<evidence type="ECO:0000305" key="8">
    <source>
    </source>
</evidence>
<evidence type="ECO:0000312" key="9">
    <source>
        <dbReference type="RGD" id="2368"/>
    </source>
</evidence>
<evidence type="ECO:0007744" key="10">
    <source>
    </source>
</evidence>
<evidence type="ECO:0007829" key="11">
    <source>
        <dbReference type="PDB" id="2ILX"/>
    </source>
</evidence>
<name>CN37_RAT</name>
<proteinExistence type="evidence at protein level"/>
<accession>P13233</accession>
<accession>Q4V796</accession>
<accession>Q64575</accession>
<sequence>MSTSFARKSHTFLPKIFFRKMSSSGAKDKPELQFPFLQDEDTVATLHECKTLFILRGLPGSGKSTLARLIVEKYHNGTKMVSADAYKIIPGSRADFSEEYKRLDEDLAGYCRRDIRVLVLDDTNHERERLDQLFEMADQYQYQVVLVEPKTAWRLDCAQLKEKNQWQLSLDDLKKLKPGLEKDFLPLYFGWFLTKKSSETLRKAGQVFLEELGNHKAFKKELRHFISGDEPKEKLDLVSYFGKRPPGVLHCTTKFCDYGKATGAEEYAQQDVVRRSYGKAFKLSISALFVTPKTAGAQVVLNEQELQLWPSDLDKPSSSESLPPGSRAHVTLGCAADVQPVQTGLDLLEILQQVKGGSQGEEVGELPRGKLYSLGKGRWMLSLAKKMEVKAIFTGYYGKGKPVPVHGSRKGGAMQICTII</sequence>
<dbReference type="EC" id="3.1.4.37" evidence="2"/>
<dbReference type="EMBL" id="M18630">
    <property type="protein sequence ID" value="AAA40939.1"/>
    <property type="status" value="ALT_SEQ"/>
    <property type="molecule type" value="mRNA"/>
</dbReference>
<dbReference type="EMBL" id="L16532">
    <property type="protein sequence ID" value="AAA64429.1"/>
    <property type="molecule type" value="mRNA"/>
</dbReference>
<dbReference type="EMBL" id="BC098066">
    <property type="protein sequence ID" value="AAH98066.1"/>
    <property type="molecule type" value="mRNA"/>
</dbReference>
<dbReference type="PIR" id="A45670">
    <property type="entry name" value="A45670"/>
</dbReference>
<dbReference type="PIR" id="I56577">
    <property type="entry name" value="I56577"/>
</dbReference>
<dbReference type="RefSeq" id="NP_036941.1">
    <property type="nucleotide sequence ID" value="NM_012809.2"/>
</dbReference>
<dbReference type="PDB" id="2ILX">
    <property type="method" value="NMR"/>
    <property type="chains" value="A=184-398"/>
</dbReference>
<dbReference type="PDBsum" id="2ILX"/>
<dbReference type="BMRB" id="P13233"/>
<dbReference type="SMR" id="P13233"/>
<dbReference type="BioGRID" id="247315">
    <property type="interactions" value="7"/>
</dbReference>
<dbReference type="FunCoup" id="P13233">
    <property type="interactions" value="1336"/>
</dbReference>
<dbReference type="IntAct" id="P13233">
    <property type="interactions" value="3"/>
</dbReference>
<dbReference type="MINT" id="P13233"/>
<dbReference type="STRING" id="10116.ENSRNOP00000023875"/>
<dbReference type="CarbonylDB" id="P13233"/>
<dbReference type="iPTMnet" id="P13233"/>
<dbReference type="PhosphoSitePlus" id="P13233"/>
<dbReference type="SwissPalm" id="P13233"/>
<dbReference type="jPOST" id="P13233"/>
<dbReference type="PaxDb" id="10116-ENSRNOP00000023875"/>
<dbReference type="Ensembl" id="ENSRNOT00000103289.1">
    <property type="protein sequence ID" value="ENSRNOP00000080276.1"/>
    <property type="gene ID" value="ENSRNOG00000017496.5"/>
</dbReference>
<dbReference type="GeneID" id="25275"/>
<dbReference type="KEGG" id="rno:25275"/>
<dbReference type="UCSC" id="RGD:2368">
    <property type="organism name" value="rat"/>
</dbReference>
<dbReference type="AGR" id="RGD:2368"/>
<dbReference type="CTD" id="1267"/>
<dbReference type="RGD" id="2368">
    <property type="gene designation" value="Cnp"/>
</dbReference>
<dbReference type="eggNOG" id="KOG2401">
    <property type="taxonomic scope" value="Eukaryota"/>
</dbReference>
<dbReference type="GeneTree" id="ENSGT00510000048410"/>
<dbReference type="HOGENOM" id="CLU_039178_0_0_1"/>
<dbReference type="InParanoid" id="P13233"/>
<dbReference type="OMA" id="DAYKINP"/>
<dbReference type="OrthoDB" id="3231855at2759"/>
<dbReference type="PhylomeDB" id="P13233"/>
<dbReference type="TreeFam" id="TF332157"/>
<dbReference type="BRENDA" id="3.1.4.37">
    <property type="organism ID" value="5301"/>
</dbReference>
<dbReference type="BRENDA" id="3.1.4.58">
    <property type="organism ID" value="5301"/>
</dbReference>
<dbReference type="EvolutionaryTrace" id="P13233"/>
<dbReference type="PRO" id="PR:P13233"/>
<dbReference type="Proteomes" id="UP000002494">
    <property type="component" value="Chromosome 10"/>
</dbReference>
<dbReference type="Bgee" id="ENSRNOG00000017496">
    <property type="expression patterns" value="Expressed in Ammon's horn and 20 other cell types or tissues"/>
</dbReference>
<dbReference type="GO" id="GO:0042995">
    <property type="term" value="C:cell projection"/>
    <property type="evidence" value="ECO:0000314"/>
    <property type="project" value="RGD"/>
</dbReference>
<dbReference type="GO" id="GO:0005737">
    <property type="term" value="C:cytoplasm"/>
    <property type="evidence" value="ECO:0000266"/>
    <property type="project" value="RGD"/>
</dbReference>
<dbReference type="GO" id="GO:0005615">
    <property type="term" value="C:extracellular space"/>
    <property type="evidence" value="ECO:0000266"/>
    <property type="project" value="RGD"/>
</dbReference>
<dbReference type="GO" id="GO:0042470">
    <property type="term" value="C:melanosome"/>
    <property type="evidence" value="ECO:0007669"/>
    <property type="project" value="UniProtKB-SubCell"/>
</dbReference>
<dbReference type="GO" id="GO:0016020">
    <property type="term" value="C:membrane"/>
    <property type="evidence" value="ECO:0000266"/>
    <property type="project" value="RGD"/>
</dbReference>
<dbReference type="GO" id="GO:0005902">
    <property type="term" value="C:microvillus"/>
    <property type="evidence" value="ECO:0000314"/>
    <property type="project" value="RGD"/>
</dbReference>
<dbReference type="GO" id="GO:0005743">
    <property type="term" value="C:mitochondrial inner membrane"/>
    <property type="evidence" value="ECO:0000314"/>
    <property type="project" value="RGD"/>
</dbReference>
<dbReference type="GO" id="GO:0005741">
    <property type="term" value="C:mitochondrial outer membrane"/>
    <property type="evidence" value="ECO:0000314"/>
    <property type="project" value="RGD"/>
</dbReference>
<dbReference type="GO" id="GO:0043209">
    <property type="term" value="C:myelin sheath"/>
    <property type="evidence" value="ECO:0000314"/>
    <property type="project" value="UniProtKB"/>
</dbReference>
<dbReference type="GO" id="GO:0035748">
    <property type="term" value="C:myelin sheath abaxonal region"/>
    <property type="evidence" value="ECO:0000314"/>
    <property type="project" value="RGD"/>
</dbReference>
<dbReference type="GO" id="GO:0035749">
    <property type="term" value="C:myelin sheath adaxonal region"/>
    <property type="evidence" value="ECO:0000314"/>
    <property type="project" value="RGD"/>
</dbReference>
<dbReference type="GO" id="GO:0048471">
    <property type="term" value="C:perinuclear region of cytoplasm"/>
    <property type="evidence" value="ECO:0000314"/>
    <property type="project" value="RGD"/>
</dbReference>
<dbReference type="GO" id="GO:0031143">
    <property type="term" value="C:pseudopodium"/>
    <property type="evidence" value="ECO:0000314"/>
    <property type="project" value="RGD"/>
</dbReference>
<dbReference type="GO" id="GO:0004113">
    <property type="term" value="F:2',3'-cyclic-nucleotide 3'-phosphodiesterase activity"/>
    <property type="evidence" value="ECO:0000314"/>
    <property type="project" value="RGD"/>
</dbReference>
<dbReference type="GO" id="GO:0030551">
    <property type="term" value="F:cyclic nucleotide binding"/>
    <property type="evidence" value="ECO:0000314"/>
    <property type="project" value="RGD"/>
</dbReference>
<dbReference type="GO" id="GO:0003723">
    <property type="term" value="F:RNA binding"/>
    <property type="evidence" value="ECO:0007669"/>
    <property type="project" value="UniProtKB-KW"/>
</dbReference>
<dbReference type="GO" id="GO:0008344">
    <property type="term" value="P:adult locomotory behavior"/>
    <property type="evidence" value="ECO:0000266"/>
    <property type="project" value="RGD"/>
</dbReference>
<dbReference type="GO" id="GO:0007409">
    <property type="term" value="P:axonogenesis"/>
    <property type="evidence" value="ECO:0000266"/>
    <property type="project" value="RGD"/>
</dbReference>
<dbReference type="GO" id="GO:0009214">
    <property type="term" value="P:cyclic nucleotide catabolic process"/>
    <property type="evidence" value="ECO:0007669"/>
    <property type="project" value="InterPro"/>
</dbReference>
<dbReference type="GO" id="GO:0030900">
    <property type="term" value="P:forebrain development"/>
    <property type="evidence" value="ECO:0000270"/>
    <property type="project" value="RGD"/>
</dbReference>
<dbReference type="GO" id="GO:0048709">
    <property type="term" value="P:oligodendrocyte differentiation"/>
    <property type="evidence" value="ECO:0000266"/>
    <property type="project" value="RGD"/>
</dbReference>
<dbReference type="GO" id="GO:0046902">
    <property type="term" value="P:regulation of mitochondrial membrane permeability"/>
    <property type="evidence" value="ECO:0000315"/>
    <property type="project" value="RGD"/>
</dbReference>
<dbReference type="GO" id="GO:0032496">
    <property type="term" value="P:response to lipopolysaccharide"/>
    <property type="evidence" value="ECO:0000270"/>
    <property type="project" value="RGD"/>
</dbReference>
<dbReference type="GO" id="GO:0009636">
    <property type="term" value="P:response to toxic substance"/>
    <property type="evidence" value="ECO:0000266"/>
    <property type="project" value="RGD"/>
</dbReference>
<dbReference type="FunFam" id="3.40.50.300:FF:000795">
    <property type="entry name" value="Tetratricopeptide repeat protein 25"/>
    <property type="match status" value="1"/>
</dbReference>
<dbReference type="FunFam" id="3.90.1740.10:FF:000001">
    <property type="entry name" value="Tetratricopeptide repeat protein 25"/>
    <property type="match status" value="1"/>
</dbReference>
<dbReference type="Gene3D" id="3.90.1740.10">
    <property type="entry name" value="2',3'-cyclic nucleotide 3'-phosphodiesterase superfamily"/>
    <property type="match status" value="1"/>
</dbReference>
<dbReference type="Gene3D" id="3.40.50.300">
    <property type="entry name" value="P-loop containing nucleotide triphosphate hydrolases"/>
    <property type="match status" value="1"/>
</dbReference>
<dbReference type="InterPro" id="IPR008431">
    <property type="entry name" value="CNPase"/>
</dbReference>
<dbReference type="InterPro" id="IPR047325">
    <property type="entry name" value="CNPase_cat"/>
</dbReference>
<dbReference type="InterPro" id="IPR009097">
    <property type="entry name" value="Cyclic_Pdiesterase"/>
</dbReference>
<dbReference type="InterPro" id="IPR027417">
    <property type="entry name" value="P-loop_NTPase"/>
</dbReference>
<dbReference type="PANTHER" id="PTHR10156">
    <property type="entry name" value="2',3'-CYCLIC-NUCLEOTIDE 3'-PHOSPHODIESTERASE"/>
    <property type="match status" value="1"/>
</dbReference>
<dbReference type="PANTHER" id="PTHR10156:SF0">
    <property type="entry name" value="2',3'-CYCLIC-NUCLEOTIDE 3'-PHOSPHODIESTERASE"/>
    <property type="match status" value="1"/>
</dbReference>
<dbReference type="Pfam" id="PF13671">
    <property type="entry name" value="AAA_33"/>
    <property type="match status" value="1"/>
</dbReference>
<dbReference type="Pfam" id="PF05881">
    <property type="entry name" value="CNPase"/>
    <property type="match status" value="1"/>
</dbReference>
<dbReference type="PIRSF" id="PIRSF000970">
    <property type="entry name" value="CNPase"/>
    <property type="match status" value="1"/>
</dbReference>
<dbReference type="SUPFAM" id="SSF55144">
    <property type="entry name" value="LigT-like"/>
    <property type="match status" value="1"/>
</dbReference>
<dbReference type="SUPFAM" id="SSF52540">
    <property type="entry name" value="P-loop containing nucleoside triphosphate hydrolases"/>
    <property type="match status" value="1"/>
</dbReference>
<protein>
    <recommendedName>
        <fullName evidence="7">2',3'-cyclic-nucleotide 3'-phosphodiesterase</fullName>
        <shortName>CNP</shortName>
        <shortName>CNPase</shortName>
        <ecNumber evidence="2">3.1.4.37</ecNumber>
    </recommendedName>
</protein>
<keyword id="KW-0002">3D-structure</keyword>
<keyword id="KW-0903">Direct protein sequencing</keyword>
<keyword id="KW-0378">Hydrolase</keyword>
<keyword id="KW-0449">Lipoprotein</keyword>
<keyword id="KW-0472">Membrane</keyword>
<keyword id="KW-0488">Methylation</keyword>
<keyword id="KW-0597">Phosphoprotein</keyword>
<keyword id="KW-0636">Prenylation</keyword>
<keyword id="KW-1185">Reference proteome</keyword>
<keyword id="KW-0694">RNA-binding</keyword>
<reference key="1">
    <citation type="journal article" date="1987" name="J. Neurosci.">
        <title>Molecular cloning of a 2',3'-cyclic nucleotide 3'-phosphodiesterase: mRNAs with different 5' ends encode the same set of proteins in nervous and lymphoid tissues.</title>
        <authorList>
            <person name="Bernier L."/>
            <person name="Alvarez F."/>
            <person name="Norgard E.M."/>
            <person name="Raible D.W."/>
            <person name="Mentaberry A."/>
            <person name="Schembri J.G."/>
            <person name="Sabatini D.D."/>
            <person name="Colman D.R."/>
        </authorList>
    </citation>
    <scope>NUCLEOTIDE SEQUENCE [MRNA]</scope>
</reference>
<reference key="2">
    <citation type="journal article" date="1994" name="J. Neurosci. Res.">
        <title>Molecular cloning and characterization of rat brain 2',3'-cyclic nucleotide 3'-phosphodiesterase isoform 2.</title>
        <authorList>
            <person name="Gravel M."/>
            <person name="DeAngelis D."/>
            <person name="Braun P.E."/>
        </authorList>
    </citation>
    <scope>NUCLEOTIDE SEQUENCE [MRNA]</scope>
    <source>
        <tissue>Brain</tissue>
    </source>
</reference>
<reference key="3">
    <citation type="journal article" date="2004" name="Genome Res.">
        <title>The status, quality, and expansion of the NIH full-length cDNA project: the Mammalian Gene Collection (MGC).</title>
        <authorList>
            <consortium name="The MGC Project Team"/>
        </authorList>
    </citation>
    <scope>NUCLEOTIDE SEQUENCE [LARGE SCALE MRNA]</scope>
    <source>
        <tissue>Placenta</tissue>
    </source>
</reference>
<reference key="4">
    <citation type="submission" date="2007-09" db="UniProtKB">
        <authorList>
            <person name="Lubec G."/>
            <person name="Afjehi-Sadat L."/>
            <person name="Chen W.-Q."/>
            <person name="Kang S.U."/>
            <person name="Lubec S."/>
        </authorList>
    </citation>
    <scope>PROTEIN SEQUENCE OF 1-15; 20-63; 80-87; 94-112; 117-150; 155-202; 204-216; 224-274; 283-368 AND 379-410</scope>
    <scope>IDENTIFICATION BY MASS SPECTROMETRY</scope>
    <source>
        <strain>Sprague-Dawley</strain>
        <tissue>Brain</tissue>
        <tissue>Hippocampus</tissue>
        <tissue>Spinal cord</tissue>
    </source>
</reference>
<reference key="5">
    <citation type="journal article" date="1994" name="J. Neurosci. Res.">
        <title>Isoprenylation of brain 2',3'-cyclic nucleotide 3'-phosphodiesterase modulates cell morphology.</title>
        <authorList>
            <person name="De Angelis D.A."/>
            <person name="Braun P.E."/>
        </authorList>
    </citation>
    <scope>ISOPRENYLATION AT CYS-417</scope>
    <scope>MUTAGENESIS OF CYS-417</scope>
</reference>
<reference key="6">
    <citation type="journal article" date="2012" name="Nat. Commun.">
        <title>Quantitative maps of protein phosphorylation sites across 14 different rat organs and tissues.</title>
        <authorList>
            <person name="Lundby A."/>
            <person name="Secher A."/>
            <person name="Lage K."/>
            <person name="Nordsborg N.B."/>
            <person name="Dmytriyev A."/>
            <person name="Lundby C."/>
            <person name="Olsen J.V."/>
        </authorList>
    </citation>
    <scope>PHOSPHORYLATION [LARGE SCALE ANALYSIS] AT SER-169; SER-227; SER-239; THR-262 AND SER-358</scope>
    <scope>IDENTIFICATION BY MASS SPECTROMETRY [LARGE SCALE ANALYSIS]</scope>
</reference>
<reference key="7">
    <citation type="journal article" date="2003" name="J. Biol. Chem.">
        <title>Structural evidence that brain cyclic nucleotide phosphodiesterase is a member of the 2H phosphodiesterase superfamily.</title>
        <authorList>
            <person name="Kozlov G."/>
            <person name="Lee J."/>
            <person name="Elias D."/>
            <person name="Gravel M."/>
            <person name="Gutierrez P."/>
            <person name="Ekiel I."/>
            <person name="Braun P.E."/>
            <person name="Gehring K."/>
        </authorList>
    </citation>
    <scope>STRUCTURE BY NMR OF 184-398 IN COMPLEX WITH PHOSPHATE</scope>
    <scope>MUTAGENESIS OF HIS-250; THR-252; HIS-329; THR-331 AND GLY-344</scope>
</reference>
<gene>
    <name evidence="9" type="primary">Cnp</name>
    <name type="synonym">Cnp1</name>
</gene>
<feature type="chain" id="PRO_0000089963" description="2',3'-cyclic-nucleotide 3'-phosphodiesterase">
    <location>
        <begin position="1"/>
        <end position="417"/>
    </location>
</feature>
<feature type="propeptide" id="PRO_0000422299" description="Removed in mature form" evidence="7">
    <location>
        <begin position="418"/>
        <end position="420"/>
    </location>
</feature>
<feature type="active site" description="Proton acceptor">
    <location>
        <position position="250"/>
    </location>
</feature>
<feature type="active site" description="Proton donor">
    <location>
        <position position="329"/>
    </location>
</feature>
<feature type="binding site" evidence="1">
    <location>
        <position position="252"/>
    </location>
    <ligand>
        <name>substrate</name>
    </ligand>
</feature>
<feature type="binding site" evidence="1">
    <location>
        <position position="331"/>
    </location>
    <ligand>
        <name>substrate</name>
    </ligand>
</feature>
<feature type="modified residue" description="Phosphoserine" evidence="3">
    <location>
        <position position="9"/>
    </location>
</feature>
<feature type="modified residue" description="Phosphotyrosine" evidence="4">
    <location>
        <position position="110"/>
    </location>
</feature>
<feature type="modified residue" description="Phosphoserine" evidence="10">
    <location>
        <position position="169"/>
    </location>
</feature>
<feature type="modified residue" description="Phosphoserine" evidence="10">
    <location>
        <position position="227"/>
    </location>
</feature>
<feature type="modified residue" description="Phosphoserine" evidence="10">
    <location>
        <position position="239"/>
    </location>
</feature>
<feature type="modified residue" description="Phosphothreonine" evidence="10">
    <location>
        <position position="262"/>
    </location>
</feature>
<feature type="modified residue" description="Phosphoserine" evidence="10">
    <location>
        <position position="358"/>
    </location>
</feature>
<feature type="modified residue" description="Cysteine methyl ester" evidence="7">
    <location>
        <position position="417"/>
    </location>
</feature>
<feature type="lipid moiety-binding region" description="S-farnesyl cysteine" evidence="8">
    <location>
        <position position="417"/>
    </location>
</feature>
<feature type="mutagenesis site" description="Reduces activity 15000-fold." evidence="5">
    <original>H</original>
    <variation>L</variation>
    <location>
        <position position="250"/>
    </location>
</feature>
<feature type="mutagenesis site" description="Reduces activity 100-fold." evidence="5">
    <original>T</original>
    <variation>A</variation>
    <location>
        <position position="252"/>
    </location>
</feature>
<feature type="mutagenesis site" description="Reduces activity 15000-fold." evidence="5">
    <original>H</original>
    <variation>L</variation>
    <location>
        <position position="329"/>
    </location>
</feature>
<feature type="mutagenesis site" description="Reduces activity 700-fold." evidence="5">
    <original>T</original>
    <variation>A</variation>
    <location>
        <position position="331"/>
    </location>
</feature>
<feature type="mutagenesis site" description="Alters secondary structure and lowers activity." evidence="5">
    <original>G</original>
    <variation>A</variation>
    <location>
        <position position="344"/>
    </location>
</feature>
<feature type="mutagenesis site" description="Abolishes binding to myelin." evidence="6">
    <original>C</original>
    <variation>S</variation>
    <location>
        <position position="417"/>
    </location>
</feature>
<feature type="strand" evidence="11">
    <location>
        <begin position="187"/>
        <end position="193"/>
    </location>
</feature>
<feature type="helix" evidence="11">
    <location>
        <begin position="195"/>
        <end position="213"/>
    </location>
</feature>
<feature type="helix" evidence="11">
    <location>
        <begin position="216"/>
        <end position="219"/>
    </location>
</feature>
<feature type="helix" evidence="11">
    <location>
        <begin position="222"/>
        <end position="225"/>
    </location>
</feature>
<feature type="strand" evidence="11">
    <location>
        <begin position="229"/>
        <end position="231"/>
    </location>
</feature>
<feature type="helix" evidence="11">
    <location>
        <begin position="237"/>
        <end position="240"/>
    </location>
</feature>
<feature type="strand" evidence="11">
    <location>
        <begin position="250"/>
        <end position="255"/>
    </location>
</feature>
<feature type="turn" evidence="11">
    <location>
        <begin position="257"/>
        <end position="260"/>
    </location>
</feature>
<feature type="strand" evidence="11">
    <location>
        <begin position="261"/>
        <end position="263"/>
    </location>
</feature>
<feature type="helix" evidence="11">
    <location>
        <begin position="264"/>
        <end position="268"/>
    </location>
</feature>
<feature type="helix" evidence="11">
    <location>
        <begin position="271"/>
        <end position="276"/>
    </location>
</feature>
<feature type="strand" evidence="11">
    <location>
        <begin position="280"/>
        <end position="290"/>
    </location>
</feature>
<feature type="strand" evidence="11">
    <location>
        <begin position="295"/>
        <end position="299"/>
    </location>
</feature>
<feature type="helix" evidence="11">
    <location>
        <begin position="303"/>
        <end position="307"/>
    </location>
</feature>
<feature type="strand" evidence="11">
    <location>
        <begin position="313"/>
        <end position="315"/>
    </location>
</feature>
<feature type="strand" evidence="11">
    <location>
        <begin position="317"/>
        <end position="320"/>
    </location>
</feature>
<feature type="strand" evidence="11">
    <location>
        <begin position="326"/>
        <end position="331"/>
    </location>
</feature>
<feature type="helix" evidence="11">
    <location>
        <begin position="340"/>
        <end position="355"/>
    </location>
</feature>
<feature type="strand" evidence="11">
    <location>
        <begin position="361"/>
        <end position="366"/>
    </location>
</feature>
<feature type="strand" evidence="11">
    <location>
        <begin position="369"/>
        <end position="373"/>
    </location>
</feature>
<feature type="strand" evidence="11">
    <location>
        <begin position="379"/>
        <end position="396"/>
    </location>
</feature>
<comment type="function">
    <text evidence="2 4">Catalyzes the formation of 2'-nucleotide products from 2',3'-cyclic substrates (By similarity). May participate in RNA metabolism in the myelinating cell, CNP is the third most abundant protein in central nervous system myelin (By similarity).</text>
</comment>
<comment type="catalytic activity">
    <reaction evidence="2">
        <text>a nucleoside 2',3'-cyclic phosphate + H2O = a nucleoside 2'-phosphate + H(+)</text>
        <dbReference type="Rhea" id="RHEA:14489"/>
        <dbReference type="ChEBI" id="CHEBI:15377"/>
        <dbReference type="ChEBI" id="CHEBI:15378"/>
        <dbReference type="ChEBI" id="CHEBI:66954"/>
        <dbReference type="ChEBI" id="CHEBI:78552"/>
        <dbReference type="EC" id="3.1.4.37"/>
    </reaction>
</comment>
<comment type="subunit">
    <text evidence="4">Exists as monomers and homodimers.</text>
</comment>
<comment type="subcellular location">
    <subcellularLocation>
        <location evidence="4">Membrane</location>
        <topology evidence="4">Lipid-anchor</topology>
    </subcellularLocation>
    <subcellularLocation>
        <location evidence="3">Melanosome</location>
    </subcellularLocation>
    <text evidence="4">Firmly bound to membrane structures of brain white matter.</text>
</comment>
<comment type="similarity">
    <text evidence="7">Belongs to the 2H phosphoesterase superfamily. CNPase family.</text>
</comment>
<comment type="sequence caution" evidence="7">
    <conflict type="frameshift">
        <sequence resource="EMBL-CDS" id="AAA40939"/>
    </conflict>
</comment>
<comment type="sequence caution" evidence="7">
    <conflict type="miscellaneous discrepancy">
        <sequence resource="EMBL-CDS" id="AAA40939"/>
    </conflict>
    <text>Sequencing errors.</text>
</comment>